<comment type="function">
    <text evidence="1">Catalyzes the formation of a hydroxyacyl-CoA by addition of water on enoyl-CoA. Also exhibits 3-hydroxyacyl-CoA epimerase and 3-hydroxyacyl-CoA dehydrogenase activities.</text>
</comment>
<comment type="catalytic activity">
    <reaction evidence="1">
        <text>a (3S)-3-hydroxyacyl-CoA = a (2E)-enoyl-CoA + H2O</text>
        <dbReference type="Rhea" id="RHEA:16105"/>
        <dbReference type="ChEBI" id="CHEBI:15377"/>
        <dbReference type="ChEBI" id="CHEBI:57318"/>
        <dbReference type="ChEBI" id="CHEBI:58856"/>
        <dbReference type="EC" id="4.2.1.17"/>
    </reaction>
</comment>
<comment type="catalytic activity">
    <reaction evidence="1">
        <text>a 4-saturated-(3S)-3-hydroxyacyl-CoA = a (3E)-enoyl-CoA + H2O</text>
        <dbReference type="Rhea" id="RHEA:20724"/>
        <dbReference type="ChEBI" id="CHEBI:15377"/>
        <dbReference type="ChEBI" id="CHEBI:58521"/>
        <dbReference type="ChEBI" id="CHEBI:137480"/>
        <dbReference type="EC" id="4.2.1.17"/>
    </reaction>
</comment>
<comment type="catalytic activity">
    <reaction evidence="1">
        <text>a (3S)-3-hydroxyacyl-CoA + NAD(+) = a 3-oxoacyl-CoA + NADH + H(+)</text>
        <dbReference type="Rhea" id="RHEA:22432"/>
        <dbReference type="ChEBI" id="CHEBI:15378"/>
        <dbReference type="ChEBI" id="CHEBI:57318"/>
        <dbReference type="ChEBI" id="CHEBI:57540"/>
        <dbReference type="ChEBI" id="CHEBI:57945"/>
        <dbReference type="ChEBI" id="CHEBI:90726"/>
        <dbReference type="EC" id="1.1.1.35"/>
    </reaction>
</comment>
<comment type="catalytic activity">
    <reaction evidence="1">
        <text>(3S)-3-hydroxybutanoyl-CoA = (3R)-3-hydroxybutanoyl-CoA</text>
        <dbReference type="Rhea" id="RHEA:21760"/>
        <dbReference type="ChEBI" id="CHEBI:57315"/>
        <dbReference type="ChEBI" id="CHEBI:57316"/>
        <dbReference type="EC" id="5.1.2.3"/>
    </reaction>
</comment>
<comment type="pathway">
    <text evidence="1">Lipid metabolism; fatty acid beta-oxidation.</text>
</comment>
<comment type="subunit">
    <text evidence="1">Heterotetramer of two alpha chains (FadJ) and two beta chains (FadI).</text>
</comment>
<comment type="subcellular location">
    <subcellularLocation>
        <location evidence="1">Cytoplasm</location>
    </subcellularLocation>
</comment>
<comment type="similarity">
    <text evidence="1">In the N-terminal section; belongs to the enoyl-CoA hydratase/isomerase family.</text>
</comment>
<comment type="similarity">
    <text evidence="1">In the central section; belongs to the 3-hydroxyacyl-CoA dehydrogenase family.</text>
</comment>
<reference key="1">
    <citation type="journal article" date="2011" name="J. Bacteriol.">
        <title>Comparative genomics of 28 Salmonella enterica isolates: evidence for CRISPR-mediated adaptive sublineage evolution.</title>
        <authorList>
            <person name="Fricke W.F."/>
            <person name="Mammel M.K."/>
            <person name="McDermott P.F."/>
            <person name="Tartera C."/>
            <person name="White D.G."/>
            <person name="Leclerc J.E."/>
            <person name="Ravel J."/>
            <person name="Cebula T.A."/>
        </authorList>
    </citation>
    <scope>NUCLEOTIDE SEQUENCE [LARGE SCALE GENOMIC DNA]</scope>
    <source>
        <strain>CT_02021853</strain>
    </source>
</reference>
<accession>B5FPN1</accession>
<dbReference type="EC" id="4.2.1.17" evidence="1"/>
<dbReference type="EC" id="5.1.2.3" evidence="1"/>
<dbReference type="EC" id="1.1.1.35" evidence="1"/>
<dbReference type="EMBL" id="CP001144">
    <property type="protein sequence ID" value="ACH76610.1"/>
    <property type="molecule type" value="Genomic_DNA"/>
</dbReference>
<dbReference type="RefSeq" id="WP_000214143.1">
    <property type="nucleotide sequence ID" value="NC_011205.1"/>
</dbReference>
<dbReference type="SMR" id="B5FPN1"/>
<dbReference type="KEGG" id="sed:SeD_A2742"/>
<dbReference type="HOGENOM" id="CLU_009834_16_1_6"/>
<dbReference type="UniPathway" id="UPA00659"/>
<dbReference type="Proteomes" id="UP000008322">
    <property type="component" value="Chromosome"/>
</dbReference>
<dbReference type="GO" id="GO:0005737">
    <property type="term" value="C:cytoplasm"/>
    <property type="evidence" value="ECO:0007669"/>
    <property type="project" value="UniProtKB-SubCell"/>
</dbReference>
<dbReference type="GO" id="GO:0008692">
    <property type="term" value="F:3-hydroxybutyryl-CoA epimerase activity"/>
    <property type="evidence" value="ECO:0007669"/>
    <property type="project" value="UniProtKB-UniRule"/>
</dbReference>
<dbReference type="GO" id="GO:0004300">
    <property type="term" value="F:enoyl-CoA hydratase activity"/>
    <property type="evidence" value="ECO:0007669"/>
    <property type="project" value="UniProtKB-UniRule"/>
</dbReference>
<dbReference type="GO" id="GO:0016509">
    <property type="term" value="F:long-chain-3-hydroxyacyl-CoA dehydrogenase activity"/>
    <property type="evidence" value="ECO:0007669"/>
    <property type="project" value="TreeGrafter"/>
</dbReference>
<dbReference type="GO" id="GO:0070403">
    <property type="term" value="F:NAD+ binding"/>
    <property type="evidence" value="ECO:0007669"/>
    <property type="project" value="InterPro"/>
</dbReference>
<dbReference type="GO" id="GO:0006635">
    <property type="term" value="P:fatty acid beta-oxidation"/>
    <property type="evidence" value="ECO:0007669"/>
    <property type="project" value="UniProtKB-UniRule"/>
</dbReference>
<dbReference type="CDD" id="cd06558">
    <property type="entry name" value="crotonase-like"/>
    <property type="match status" value="1"/>
</dbReference>
<dbReference type="FunFam" id="1.10.1040.50:FF:000003">
    <property type="entry name" value="Fatty acid oxidation complex subunit alpha"/>
    <property type="match status" value="1"/>
</dbReference>
<dbReference type="FunFam" id="3.90.226.10:FF:000011">
    <property type="entry name" value="Fatty acid oxidation complex subunit alpha"/>
    <property type="match status" value="1"/>
</dbReference>
<dbReference type="FunFam" id="3.40.50.720:FF:000009">
    <property type="entry name" value="Fatty oxidation complex, alpha subunit"/>
    <property type="match status" value="1"/>
</dbReference>
<dbReference type="Gene3D" id="1.10.1040.50">
    <property type="match status" value="1"/>
</dbReference>
<dbReference type="Gene3D" id="3.90.226.10">
    <property type="entry name" value="2-enoyl-CoA Hydratase, Chain A, domain 1"/>
    <property type="match status" value="1"/>
</dbReference>
<dbReference type="Gene3D" id="3.40.50.720">
    <property type="entry name" value="NAD(P)-binding Rossmann-like Domain"/>
    <property type="match status" value="1"/>
</dbReference>
<dbReference type="HAMAP" id="MF_01617">
    <property type="entry name" value="FadJ"/>
    <property type="match status" value="1"/>
</dbReference>
<dbReference type="InterPro" id="IPR006180">
    <property type="entry name" value="3-OHacyl-CoA_DH_CS"/>
</dbReference>
<dbReference type="InterPro" id="IPR006176">
    <property type="entry name" value="3-OHacyl-CoA_DH_NAD-bd"/>
</dbReference>
<dbReference type="InterPro" id="IPR006108">
    <property type="entry name" value="3HC_DH_C"/>
</dbReference>
<dbReference type="InterPro" id="IPR008927">
    <property type="entry name" value="6-PGluconate_DH-like_C_sf"/>
</dbReference>
<dbReference type="InterPro" id="IPR029045">
    <property type="entry name" value="ClpP/crotonase-like_dom_sf"/>
</dbReference>
<dbReference type="InterPro" id="IPR001753">
    <property type="entry name" value="Enoyl-CoA_hydra/iso"/>
</dbReference>
<dbReference type="InterPro" id="IPR050136">
    <property type="entry name" value="FA_oxidation_alpha_subunit"/>
</dbReference>
<dbReference type="InterPro" id="IPR012802">
    <property type="entry name" value="FadJ"/>
</dbReference>
<dbReference type="InterPro" id="IPR036291">
    <property type="entry name" value="NAD(P)-bd_dom_sf"/>
</dbReference>
<dbReference type="NCBIfam" id="TIGR02440">
    <property type="entry name" value="FadJ"/>
    <property type="match status" value="1"/>
</dbReference>
<dbReference type="NCBIfam" id="NF008363">
    <property type="entry name" value="PRK11154.1"/>
    <property type="match status" value="1"/>
</dbReference>
<dbReference type="PANTHER" id="PTHR43612">
    <property type="entry name" value="TRIFUNCTIONAL ENZYME SUBUNIT ALPHA"/>
    <property type="match status" value="1"/>
</dbReference>
<dbReference type="PANTHER" id="PTHR43612:SF3">
    <property type="entry name" value="TRIFUNCTIONAL ENZYME SUBUNIT ALPHA, MITOCHONDRIAL"/>
    <property type="match status" value="1"/>
</dbReference>
<dbReference type="Pfam" id="PF00725">
    <property type="entry name" value="3HCDH"/>
    <property type="match status" value="1"/>
</dbReference>
<dbReference type="Pfam" id="PF02737">
    <property type="entry name" value="3HCDH_N"/>
    <property type="match status" value="1"/>
</dbReference>
<dbReference type="Pfam" id="PF00378">
    <property type="entry name" value="ECH_1"/>
    <property type="match status" value="1"/>
</dbReference>
<dbReference type="SUPFAM" id="SSF48179">
    <property type="entry name" value="6-phosphogluconate dehydrogenase C-terminal domain-like"/>
    <property type="match status" value="2"/>
</dbReference>
<dbReference type="SUPFAM" id="SSF52096">
    <property type="entry name" value="ClpP/crotonase"/>
    <property type="match status" value="1"/>
</dbReference>
<dbReference type="SUPFAM" id="SSF51735">
    <property type="entry name" value="NAD(P)-binding Rossmann-fold domains"/>
    <property type="match status" value="1"/>
</dbReference>
<dbReference type="PROSITE" id="PS00067">
    <property type="entry name" value="3HCDH"/>
    <property type="match status" value="1"/>
</dbReference>
<evidence type="ECO:0000255" key="1">
    <source>
        <dbReference type="HAMAP-Rule" id="MF_01617"/>
    </source>
</evidence>
<sequence length="715" mass="77266">MTTTSAFMLNVRLDNVAVVAIDVPGEKVNTLKAEFAAQVRAILKQIRENKALQGVVFISAKADNFIAGADINMIGHCQNAQEAETLARQGQQLMAEIQALPVPVIAAIHGACLGGGLEMALACHRRICTDDVKTVLGLPEVQLGLLPGSGGTQRLPRLVGVSTALDMILTGKQLRARQALKAGLVDDVVPQTILLEAAVELAKKERLAQRTLPVRERILAGPLGRALLFRLVRKKTAQKTQGNYPATERIIDVIETGLAQGSSSGYDAEARAFGELAMTPQSQALRAVFFASTEVKKDPGSDAPPGPLNSVGILGGGLMGGGIAWVTACKGGLPVRIKDINTQGINHALKYSWDLLETKVRRRHIKANERDKQLALISGSTDYRGFSHRDLVIEAVFEDLPLKQQMVAEVEQNCAAHTIFASNTSSLPIGDIAANAARPEQVIGLHFFSPVEKMPLVEVIPHASTSAQTIATTVKLAKKQGKTPIVVSDKAGFYVNRILVPYINEAIRMLTEGERVEHIDAALVKFGFPVGPIQLLDEVGIDTGTKIIPVLEAAYGERFSAPANVVASILNDDRKGRKNGRGFYLYGEKGRKSKKQVDPAIYKLIGVQGQSRLSAQQVAERCVMLMLNEAARCFDEKVIRSARDGDIGAVFGIGFPPFLGGPFRYMDALGPGEMVATLQRLAALYGPRYAPCEQLVRMAERREHFWTNGETDQGN</sequence>
<organism>
    <name type="scientific">Salmonella dublin (strain CT_02021853)</name>
    <dbReference type="NCBI Taxonomy" id="439851"/>
    <lineage>
        <taxon>Bacteria</taxon>
        <taxon>Pseudomonadati</taxon>
        <taxon>Pseudomonadota</taxon>
        <taxon>Gammaproteobacteria</taxon>
        <taxon>Enterobacterales</taxon>
        <taxon>Enterobacteriaceae</taxon>
        <taxon>Salmonella</taxon>
    </lineage>
</organism>
<feature type="chain" id="PRO_1000185948" description="Fatty acid oxidation complex subunit alpha">
    <location>
        <begin position="1"/>
        <end position="715"/>
    </location>
</feature>
<feature type="region of interest" description="Enoyl-CoA hydratase" evidence="1">
    <location>
        <begin position="1"/>
        <end position="190"/>
    </location>
</feature>
<feature type="region of interest" description="3-hydroxyacyl-CoA dehydrogenase" evidence="1">
    <location>
        <begin position="306"/>
        <end position="715"/>
    </location>
</feature>
<feature type="site" description="Important for catalytic activity" evidence="1">
    <location>
        <position position="118"/>
    </location>
</feature>
<feature type="site" description="Important for catalytic activity" evidence="1">
    <location>
        <position position="140"/>
    </location>
</feature>
<proteinExistence type="inferred from homology"/>
<protein>
    <recommendedName>
        <fullName evidence="1">Fatty acid oxidation complex subunit alpha</fullName>
    </recommendedName>
    <domain>
        <recommendedName>
            <fullName evidence="1">Enoyl-CoA hydratase/3-hydroxybutyryl-CoA epimerase</fullName>
            <ecNumber evidence="1">4.2.1.17</ecNumber>
            <ecNumber evidence="1">5.1.2.3</ecNumber>
        </recommendedName>
    </domain>
    <domain>
        <recommendedName>
            <fullName evidence="1">3-hydroxyacyl-CoA dehydrogenase</fullName>
            <ecNumber evidence="1">1.1.1.35</ecNumber>
        </recommendedName>
    </domain>
</protein>
<gene>
    <name evidence="1" type="primary">fadJ</name>
    <name type="ordered locus">SeD_A2742</name>
</gene>
<name>FADJ_SALDC</name>
<keyword id="KW-0963">Cytoplasm</keyword>
<keyword id="KW-0276">Fatty acid metabolism</keyword>
<keyword id="KW-0413">Isomerase</keyword>
<keyword id="KW-0442">Lipid degradation</keyword>
<keyword id="KW-0443">Lipid metabolism</keyword>
<keyword id="KW-0456">Lyase</keyword>
<keyword id="KW-0511">Multifunctional enzyme</keyword>
<keyword id="KW-0520">NAD</keyword>
<keyword id="KW-0560">Oxidoreductase</keyword>